<feature type="chain" id="PRO_1000008248" description="Translation initiation factor IF-2">
    <location>
        <begin position="1"/>
        <end position="735"/>
    </location>
</feature>
<feature type="domain" description="tr-type G">
    <location>
        <begin position="236"/>
        <end position="405"/>
    </location>
</feature>
<feature type="region of interest" description="Disordered" evidence="3">
    <location>
        <begin position="52"/>
        <end position="154"/>
    </location>
</feature>
<feature type="region of interest" description="G1" evidence="1">
    <location>
        <begin position="245"/>
        <end position="252"/>
    </location>
</feature>
<feature type="region of interest" description="G2" evidence="1">
    <location>
        <begin position="270"/>
        <end position="274"/>
    </location>
</feature>
<feature type="region of interest" description="G3" evidence="1">
    <location>
        <begin position="291"/>
        <end position="294"/>
    </location>
</feature>
<feature type="region of interest" description="G4" evidence="1">
    <location>
        <begin position="345"/>
        <end position="348"/>
    </location>
</feature>
<feature type="region of interest" description="G5" evidence="1">
    <location>
        <begin position="381"/>
        <end position="383"/>
    </location>
</feature>
<feature type="compositionally biased region" description="Basic and acidic residues" evidence="3">
    <location>
        <begin position="52"/>
        <end position="66"/>
    </location>
</feature>
<feature type="compositionally biased region" description="Basic and acidic residues" evidence="3">
    <location>
        <begin position="101"/>
        <end position="117"/>
    </location>
</feature>
<feature type="compositionally biased region" description="Basic residues" evidence="3">
    <location>
        <begin position="121"/>
        <end position="133"/>
    </location>
</feature>
<feature type="compositionally biased region" description="Low complexity" evidence="3">
    <location>
        <begin position="134"/>
        <end position="145"/>
    </location>
</feature>
<feature type="binding site" evidence="2">
    <location>
        <begin position="245"/>
        <end position="252"/>
    </location>
    <ligand>
        <name>GTP</name>
        <dbReference type="ChEBI" id="CHEBI:37565"/>
    </ligand>
</feature>
<feature type="binding site" evidence="2">
    <location>
        <begin position="291"/>
        <end position="295"/>
    </location>
    <ligand>
        <name>GTP</name>
        <dbReference type="ChEBI" id="CHEBI:37565"/>
    </ligand>
</feature>
<feature type="binding site" evidence="2">
    <location>
        <begin position="345"/>
        <end position="348"/>
    </location>
    <ligand>
        <name>GTP</name>
        <dbReference type="ChEBI" id="CHEBI:37565"/>
    </ligand>
</feature>
<comment type="function">
    <text evidence="2">One of the essential components for the initiation of protein synthesis. Protects formylmethionyl-tRNA from spontaneous hydrolysis and promotes its binding to the 30S ribosomal subunits. Also involved in the hydrolysis of GTP during the formation of the 70S ribosomal complex.</text>
</comment>
<comment type="subcellular location">
    <subcellularLocation>
        <location evidence="2">Cytoplasm</location>
    </subcellularLocation>
</comment>
<comment type="similarity">
    <text evidence="2">Belongs to the TRAFAC class translation factor GTPase superfamily. Classic translation factor GTPase family. IF-2 subfamily.</text>
</comment>
<evidence type="ECO:0000250" key="1"/>
<evidence type="ECO:0000255" key="2">
    <source>
        <dbReference type="HAMAP-Rule" id="MF_00100"/>
    </source>
</evidence>
<evidence type="ECO:0000256" key="3">
    <source>
        <dbReference type="SAM" id="MobiDB-lite"/>
    </source>
</evidence>
<gene>
    <name evidence="2" type="primary">infB</name>
    <name type="ordered locus">GTNG_1117</name>
</gene>
<proteinExistence type="inferred from homology"/>
<keyword id="KW-0963">Cytoplasm</keyword>
<keyword id="KW-0342">GTP-binding</keyword>
<keyword id="KW-0396">Initiation factor</keyword>
<keyword id="KW-0547">Nucleotide-binding</keyword>
<keyword id="KW-0648">Protein biosynthesis</keyword>
<name>IF2_GEOTN</name>
<sequence>MSKMRVYEYAKKHNVPSKDVIHKLKEMNIEVNNHMTMLEADVVEKLDHQYRVNSEKKAEKKTEKPKRPTPAKAADFADEEMFEDKKETAKAKPAKKKGAVKGKETKKTEAQQQEKKLFQAAKKKGKGPMKGKKQAAPASKQAQQPAKKEKELPKKITFEGSLTVAELAKKLGREPSEIIKKLFMLGVMATINQDLDKDAIELICSDYGVEVEEKVTIDETNFETIEIVDAPEDLVERPPVVTIMGHVDHGKTTLLDAIRHSKVTEQEAGGITQHIGAYQVTVNGKKITFLDTPGHEAFTTMRARGAQVTDIVILVVAADDGVMPQTVEAINHAKAANVPIIVAINKMDKPEANPDRVMQELMEYNLVPEEWGGDTIFCKLSAKTQDGIDHLLEMILLVSEMEELKANPNRRALGTVIEAKLDKGRGPVATLLVQAGTLKVGDPIVVGTTYGRVRAMVNDSGRRVKEAGPSMPVEITGLHDVPQAGDRFMVFEDEKKARQIGEARAQRQLQEQRSVKTRVSLDDLFEQIKQGEMKELNLIVKADVQGSVEALVAALQKIDIEGVRVKIIHAAVGAITESDILLATTSNAIVIGFNVRPDTNAKRAAESENVDIRLHRIIYNVIEEIEAAMKGMLDPEYEEKVIGQAEVRQTFKVSKVGTIAGCYVTDGKITRDSKVRLIRQGIVVYEGEIDSLKRYKDDVREVAQGYECGVTIKNFNDIKEGDVIEAYIMQEVARA</sequence>
<dbReference type="EMBL" id="CP000557">
    <property type="protein sequence ID" value="ABO66491.1"/>
    <property type="molecule type" value="Genomic_DNA"/>
</dbReference>
<dbReference type="RefSeq" id="WP_011887154.1">
    <property type="nucleotide sequence ID" value="NC_009328.1"/>
</dbReference>
<dbReference type="BMRB" id="A4IMD7"/>
<dbReference type="SMR" id="A4IMD7"/>
<dbReference type="KEGG" id="gtn:GTNG_1117"/>
<dbReference type="eggNOG" id="COG0532">
    <property type="taxonomic scope" value="Bacteria"/>
</dbReference>
<dbReference type="HOGENOM" id="CLU_006301_5_1_9"/>
<dbReference type="Proteomes" id="UP000001578">
    <property type="component" value="Chromosome"/>
</dbReference>
<dbReference type="GO" id="GO:0005829">
    <property type="term" value="C:cytosol"/>
    <property type="evidence" value="ECO:0007669"/>
    <property type="project" value="TreeGrafter"/>
</dbReference>
<dbReference type="GO" id="GO:0005525">
    <property type="term" value="F:GTP binding"/>
    <property type="evidence" value="ECO:0007669"/>
    <property type="project" value="UniProtKB-KW"/>
</dbReference>
<dbReference type="GO" id="GO:0003924">
    <property type="term" value="F:GTPase activity"/>
    <property type="evidence" value="ECO:0007669"/>
    <property type="project" value="UniProtKB-UniRule"/>
</dbReference>
<dbReference type="GO" id="GO:0003743">
    <property type="term" value="F:translation initiation factor activity"/>
    <property type="evidence" value="ECO:0007669"/>
    <property type="project" value="UniProtKB-UniRule"/>
</dbReference>
<dbReference type="CDD" id="cd01887">
    <property type="entry name" value="IF2_eIF5B"/>
    <property type="match status" value="1"/>
</dbReference>
<dbReference type="CDD" id="cd03702">
    <property type="entry name" value="IF2_mtIF2_II"/>
    <property type="match status" value="1"/>
</dbReference>
<dbReference type="CDD" id="cd03692">
    <property type="entry name" value="mtIF2_IVc"/>
    <property type="match status" value="1"/>
</dbReference>
<dbReference type="FunFam" id="2.40.30.10:FF:000007">
    <property type="entry name" value="Translation initiation factor IF-2"/>
    <property type="match status" value="1"/>
</dbReference>
<dbReference type="FunFam" id="2.40.30.10:FF:000008">
    <property type="entry name" value="Translation initiation factor IF-2"/>
    <property type="match status" value="1"/>
</dbReference>
<dbReference type="FunFam" id="3.40.50.10050:FF:000001">
    <property type="entry name" value="Translation initiation factor IF-2"/>
    <property type="match status" value="1"/>
</dbReference>
<dbReference type="FunFam" id="3.40.50.300:FF:000019">
    <property type="entry name" value="Translation initiation factor IF-2"/>
    <property type="match status" value="1"/>
</dbReference>
<dbReference type="Gene3D" id="1.10.10.2480">
    <property type="match status" value="1"/>
</dbReference>
<dbReference type="Gene3D" id="3.40.50.300">
    <property type="entry name" value="P-loop containing nucleotide triphosphate hydrolases"/>
    <property type="match status" value="1"/>
</dbReference>
<dbReference type="Gene3D" id="2.40.30.10">
    <property type="entry name" value="Translation factors"/>
    <property type="match status" value="2"/>
</dbReference>
<dbReference type="Gene3D" id="3.40.50.10050">
    <property type="entry name" value="Translation initiation factor IF- 2, domain 3"/>
    <property type="match status" value="1"/>
</dbReference>
<dbReference type="HAMAP" id="MF_00100_B">
    <property type="entry name" value="IF_2_B"/>
    <property type="match status" value="1"/>
</dbReference>
<dbReference type="InterPro" id="IPR053905">
    <property type="entry name" value="EF-G-like_DII"/>
</dbReference>
<dbReference type="InterPro" id="IPR004161">
    <property type="entry name" value="EFTu-like_2"/>
</dbReference>
<dbReference type="InterPro" id="IPR044145">
    <property type="entry name" value="IF2_II"/>
</dbReference>
<dbReference type="InterPro" id="IPR006847">
    <property type="entry name" value="IF2_N"/>
</dbReference>
<dbReference type="InterPro" id="IPR027417">
    <property type="entry name" value="P-loop_NTPase"/>
</dbReference>
<dbReference type="InterPro" id="IPR005225">
    <property type="entry name" value="Small_GTP-bd"/>
</dbReference>
<dbReference type="InterPro" id="IPR000795">
    <property type="entry name" value="T_Tr_GTP-bd_dom"/>
</dbReference>
<dbReference type="InterPro" id="IPR000178">
    <property type="entry name" value="TF_IF2_bacterial-like"/>
</dbReference>
<dbReference type="InterPro" id="IPR015760">
    <property type="entry name" value="TIF_IF2"/>
</dbReference>
<dbReference type="InterPro" id="IPR023115">
    <property type="entry name" value="TIF_IF2_dom3"/>
</dbReference>
<dbReference type="InterPro" id="IPR036925">
    <property type="entry name" value="TIF_IF2_dom3_sf"/>
</dbReference>
<dbReference type="InterPro" id="IPR009000">
    <property type="entry name" value="Transl_B-barrel_sf"/>
</dbReference>
<dbReference type="NCBIfam" id="TIGR00487">
    <property type="entry name" value="IF-2"/>
    <property type="match status" value="1"/>
</dbReference>
<dbReference type="NCBIfam" id="TIGR00231">
    <property type="entry name" value="small_GTP"/>
    <property type="match status" value="1"/>
</dbReference>
<dbReference type="PANTHER" id="PTHR43381:SF5">
    <property type="entry name" value="TR-TYPE G DOMAIN-CONTAINING PROTEIN"/>
    <property type="match status" value="1"/>
</dbReference>
<dbReference type="PANTHER" id="PTHR43381">
    <property type="entry name" value="TRANSLATION INITIATION FACTOR IF-2-RELATED"/>
    <property type="match status" value="1"/>
</dbReference>
<dbReference type="Pfam" id="PF22042">
    <property type="entry name" value="EF-G_D2"/>
    <property type="match status" value="1"/>
</dbReference>
<dbReference type="Pfam" id="PF00009">
    <property type="entry name" value="GTP_EFTU"/>
    <property type="match status" value="1"/>
</dbReference>
<dbReference type="Pfam" id="PF03144">
    <property type="entry name" value="GTP_EFTU_D2"/>
    <property type="match status" value="1"/>
</dbReference>
<dbReference type="Pfam" id="PF11987">
    <property type="entry name" value="IF-2"/>
    <property type="match status" value="1"/>
</dbReference>
<dbReference type="Pfam" id="PF04760">
    <property type="entry name" value="IF2_N"/>
    <property type="match status" value="2"/>
</dbReference>
<dbReference type="SUPFAM" id="SSF52156">
    <property type="entry name" value="Initiation factor IF2/eIF5b, domain 3"/>
    <property type="match status" value="1"/>
</dbReference>
<dbReference type="SUPFAM" id="SSF52540">
    <property type="entry name" value="P-loop containing nucleoside triphosphate hydrolases"/>
    <property type="match status" value="1"/>
</dbReference>
<dbReference type="SUPFAM" id="SSF50447">
    <property type="entry name" value="Translation proteins"/>
    <property type="match status" value="2"/>
</dbReference>
<dbReference type="PROSITE" id="PS51722">
    <property type="entry name" value="G_TR_2"/>
    <property type="match status" value="1"/>
</dbReference>
<dbReference type="PROSITE" id="PS01176">
    <property type="entry name" value="IF2"/>
    <property type="match status" value="1"/>
</dbReference>
<reference key="1">
    <citation type="journal article" date="2007" name="Proc. Natl. Acad. Sci. U.S.A.">
        <title>Genome and proteome of long-chain alkane degrading Geobacillus thermodenitrificans NG80-2 isolated from a deep-subsurface oil reservoir.</title>
        <authorList>
            <person name="Feng L."/>
            <person name="Wang W."/>
            <person name="Cheng J."/>
            <person name="Ren Y."/>
            <person name="Zhao G."/>
            <person name="Gao C."/>
            <person name="Tang Y."/>
            <person name="Liu X."/>
            <person name="Han W."/>
            <person name="Peng X."/>
            <person name="Liu R."/>
            <person name="Wang L."/>
        </authorList>
    </citation>
    <scope>NUCLEOTIDE SEQUENCE [LARGE SCALE GENOMIC DNA]</scope>
    <source>
        <strain>NG80-2</strain>
    </source>
</reference>
<protein>
    <recommendedName>
        <fullName evidence="2">Translation initiation factor IF-2</fullName>
    </recommendedName>
</protein>
<accession>A4IMD7</accession>
<organism>
    <name type="scientific">Geobacillus thermodenitrificans (strain NG80-2)</name>
    <dbReference type="NCBI Taxonomy" id="420246"/>
    <lineage>
        <taxon>Bacteria</taxon>
        <taxon>Bacillati</taxon>
        <taxon>Bacillota</taxon>
        <taxon>Bacilli</taxon>
        <taxon>Bacillales</taxon>
        <taxon>Anoxybacillaceae</taxon>
        <taxon>Geobacillus</taxon>
    </lineage>
</organism>